<sequence>MRGLSRNSGAAAIFAILLILAVHNWSVAVSSQSTEFAGDFPPFETECRGTIAECSVSAALGDGGDLFYGGGEMGEEFEMDSEINRRILATRRYISYGALRRNTIPCSRRGASYYNCRRGAQANPYSRGCSAITRCRRS</sequence>
<feature type="signal peptide" evidence="2">
    <location>
        <begin position="1"/>
        <end position="28"/>
    </location>
</feature>
<feature type="propeptide" id="PRO_0000420318" description="Removed in mature form" evidence="3">
    <location>
        <begin position="29"/>
        <end position="88"/>
    </location>
</feature>
<feature type="chain" id="PRO_0000420319" description="Rapid alkalinization factor 23">
    <location>
        <begin position="89"/>
        <end position="138"/>
    </location>
</feature>
<feature type="site" description="Required for proteolytic cleavage" evidence="5">
    <location>
        <begin position="85"/>
        <end position="86"/>
    </location>
</feature>
<feature type="disulfide bond" evidence="1">
    <location>
        <begin position="106"/>
        <end position="116"/>
    </location>
</feature>
<feature type="disulfide bond" evidence="1">
    <location>
        <begin position="129"/>
        <end position="135"/>
    </location>
</feature>
<feature type="mutagenesis site" description="Loss of propeptide cleavage by kexin-like convertase leading to an impaired activity." evidence="3">
    <original>RR</original>
    <variation>GG</variation>
    <location>
        <begin position="85"/>
        <end position="86"/>
    </location>
</feature>
<feature type="helix" evidence="6">
    <location>
        <begin position="96"/>
        <end position="99"/>
    </location>
</feature>
<feature type="helix" evidence="6">
    <location>
        <begin position="100"/>
        <end position="102"/>
    </location>
</feature>
<keyword id="KW-0002">3D-structure</keyword>
<keyword id="KW-1070">Brassinosteroid signaling pathway</keyword>
<keyword id="KW-1015">Disulfide bond</keyword>
<keyword id="KW-0372">Hormone</keyword>
<keyword id="KW-1185">Reference proteome</keyword>
<keyword id="KW-0964">Secreted</keyword>
<keyword id="KW-0732">Signal</keyword>
<comment type="function">
    <text evidence="1 3">Cell signaling peptide that may regulate plant stress, growth, and development. Mediates a rapid alkalinization of extracellular space by mediating a transient increase in the cytoplasmic Ca(2+) concentration leading to a calcium-dependent signaling events through a cell surface receptor and a concomitant activation of some intracellular mitogen-activated protein kinases (By similarity). Negatively regulates brassinolide (BL)-mediated signaling pathway (e.g. BL-induced hypocotyl elongation and branching limitation) (PubMed:19473327).</text>
</comment>
<comment type="subcellular location">
    <subcellularLocation>
        <location evidence="1">Secreted</location>
    </subcellularLocation>
</comment>
<comment type="developmental stage">
    <text evidence="3">In very young seedlings, confined to the tips of the cotyledons. Later expressed in the cotyledon vasculature and petiole. Present in the tip of emerging leaves. In mature leaves, observed in the vasculature.</text>
</comment>
<comment type="induction">
    <text evidence="3">Repressed by brassinolide (BL) treatment.</text>
</comment>
<comment type="PTM">
    <text evidence="3">Proteolytically cleaved, probably by SBT6.1 (S1P), a subtilisin-like serine protease (subtilase).</text>
</comment>
<comment type="similarity">
    <text evidence="4">Belongs to the plant rapid alkalinization factor (RALF) family.</text>
</comment>
<organism>
    <name type="scientific">Arabidopsis thaliana</name>
    <name type="common">Mouse-ear cress</name>
    <dbReference type="NCBI Taxonomy" id="3702"/>
    <lineage>
        <taxon>Eukaryota</taxon>
        <taxon>Viridiplantae</taxon>
        <taxon>Streptophyta</taxon>
        <taxon>Embryophyta</taxon>
        <taxon>Tracheophyta</taxon>
        <taxon>Spermatophyta</taxon>
        <taxon>Magnoliopsida</taxon>
        <taxon>eudicotyledons</taxon>
        <taxon>Gunneridae</taxon>
        <taxon>Pentapetalae</taxon>
        <taxon>rosids</taxon>
        <taxon>malvids</taxon>
        <taxon>Brassicales</taxon>
        <taxon>Brassicaceae</taxon>
        <taxon>Camelineae</taxon>
        <taxon>Arabidopsis</taxon>
    </lineage>
</organism>
<evidence type="ECO:0000250" key="1"/>
<evidence type="ECO:0000255" key="2"/>
<evidence type="ECO:0000269" key="3">
    <source>
    </source>
</evidence>
<evidence type="ECO:0000305" key="4"/>
<evidence type="ECO:0000305" key="5">
    <source>
    </source>
</evidence>
<evidence type="ECO:0007829" key="6">
    <source>
        <dbReference type="PDB" id="6A5E"/>
    </source>
</evidence>
<dbReference type="EMBL" id="AB022217">
    <property type="protein sequence ID" value="BAB02748.1"/>
    <property type="molecule type" value="Genomic_DNA"/>
</dbReference>
<dbReference type="EMBL" id="CP002686">
    <property type="protein sequence ID" value="AEE75839.1"/>
    <property type="molecule type" value="Genomic_DNA"/>
</dbReference>
<dbReference type="EMBL" id="CP002686">
    <property type="protein sequence ID" value="ANM65229.1"/>
    <property type="molecule type" value="Genomic_DNA"/>
</dbReference>
<dbReference type="EMBL" id="CP002686">
    <property type="protein sequence ID" value="ANM65230.1"/>
    <property type="molecule type" value="Genomic_DNA"/>
</dbReference>
<dbReference type="EMBL" id="AY048301">
    <property type="protein sequence ID" value="AAK82563.1"/>
    <property type="molecule type" value="mRNA"/>
</dbReference>
<dbReference type="EMBL" id="AY072630">
    <property type="protein sequence ID" value="AAL62021.1"/>
    <property type="molecule type" value="mRNA"/>
</dbReference>
<dbReference type="EMBL" id="AY084588">
    <property type="protein sequence ID" value="AAM61153.1"/>
    <property type="molecule type" value="mRNA"/>
</dbReference>
<dbReference type="RefSeq" id="NP_001319570.1">
    <property type="nucleotide sequence ID" value="NM_001338245.1"/>
</dbReference>
<dbReference type="RefSeq" id="NP_001327214.1">
    <property type="nucleotide sequence ID" value="NM_001338247.1"/>
</dbReference>
<dbReference type="RefSeq" id="NP_001327215.1">
    <property type="nucleotide sequence ID" value="NM_001338246.1"/>
</dbReference>
<dbReference type="PDB" id="6A5E">
    <property type="method" value="X-ray"/>
    <property type="resolution" value="2.77 A"/>
    <property type="chains" value="E/F=92-106"/>
</dbReference>
<dbReference type="PDBsum" id="6A5E"/>
<dbReference type="SMR" id="Q9LUS7"/>
<dbReference type="FunCoup" id="Q9LUS7">
    <property type="interactions" value="41"/>
</dbReference>
<dbReference type="STRING" id="3702.Q9LUS7"/>
<dbReference type="PaxDb" id="3702-AT3G16570.1"/>
<dbReference type="ProteomicsDB" id="228157"/>
<dbReference type="EnsemblPlants" id="AT3G16570.1">
    <property type="protein sequence ID" value="AT3G16570.1"/>
    <property type="gene ID" value="AT3G16570"/>
</dbReference>
<dbReference type="EnsemblPlants" id="AT3G16570.2">
    <property type="protein sequence ID" value="AT3G16570.2"/>
    <property type="gene ID" value="AT3G16570"/>
</dbReference>
<dbReference type="EnsemblPlants" id="AT3G16570.3">
    <property type="protein sequence ID" value="AT3G16570.3"/>
    <property type="gene ID" value="AT3G16570"/>
</dbReference>
<dbReference type="GeneID" id="820907"/>
<dbReference type="Gramene" id="AT3G16570.1">
    <property type="protein sequence ID" value="AT3G16570.1"/>
    <property type="gene ID" value="AT3G16570"/>
</dbReference>
<dbReference type="Gramene" id="AT3G16570.2">
    <property type="protein sequence ID" value="AT3G16570.2"/>
    <property type="gene ID" value="AT3G16570"/>
</dbReference>
<dbReference type="Gramene" id="AT3G16570.3">
    <property type="protein sequence ID" value="AT3G16570.3"/>
    <property type="gene ID" value="AT3G16570"/>
</dbReference>
<dbReference type="KEGG" id="ath:AT3G16570"/>
<dbReference type="Araport" id="AT3G16570"/>
<dbReference type="TAIR" id="AT3G16570">
    <property type="gene designation" value="RALF23"/>
</dbReference>
<dbReference type="eggNOG" id="ENOG502S1TF">
    <property type="taxonomic scope" value="Eukaryota"/>
</dbReference>
<dbReference type="HOGENOM" id="CLU_127895_1_2_1"/>
<dbReference type="InParanoid" id="Q9LUS7"/>
<dbReference type="OMA" id="ILAVHNW"/>
<dbReference type="PhylomeDB" id="Q9LUS7"/>
<dbReference type="PRO" id="PR:Q9LUS7"/>
<dbReference type="Proteomes" id="UP000006548">
    <property type="component" value="Chromosome 3"/>
</dbReference>
<dbReference type="ExpressionAtlas" id="Q9LUS7">
    <property type="expression patterns" value="baseline and differential"/>
</dbReference>
<dbReference type="GO" id="GO:0048046">
    <property type="term" value="C:apoplast"/>
    <property type="evidence" value="ECO:0000250"/>
    <property type="project" value="TAIR"/>
</dbReference>
<dbReference type="GO" id="GO:0005179">
    <property type="term" value="F:hormone activity"/>
    <property type="evidence" value="ECO:0000250"/>
    <property type="project" value="UniProtKB"/>
</dbReference>
<dbReference type="GO" id="GO:0009742">
    <property type="term" value="P:brassinosteroid mediated signaling pathway"/>
    <property type="evidence" value="ECO:0007669"/>
    <property type="project" value="UniProtKB-KW"/>
</dbReference>
<dbReference type="GO" id="GO:0019722">
    <property type="term" value="P:calcium-mediated signaling"/>
    <property type="evidence" value="ECO:0000250"/>
    <property type="project" value="UniProtKB"/>
</dbReference>
<dbReference type="GO" id="GO:0007267">
    <property type="term" value="P:cell-cell signaling"/>
    <property type="evidence" value="ECO:0000250"/>
    <property type="project" value="TAIR"/>
</dbReference>
<dbReference type="GO" id="GO:0045926">
    <property type="term" value="P:negative regulation of growth"/>
    <property type="evidence" value="ECO:0000315"/>
    <property type="project" value="TAIR"/>
</dbReference>
<dbReference type="GO" id="GO:0009741">
    <property type="term" value="P:response to brassinosteroid"/>
    <property type="evidence" value="ECO:0000270"/>
    <property type="project" value="TAIR"/>
</dbReference>
<dbReference type="InterPro" id="IPR008801">
    <property type="entry name" value="RALF"/>
</dbReference>
<dbReference type="PANTHER" id="PTHR33136:SF95">
    <property type="entry name" value="PROTEIN RALF-LIKE 33-RELATED"/>
    <property type="match status" value="1"/>
</dbReference>
<dbReference type="PANTHER" id="PTHR33136">
    <property type="entry name" value="RAPID ALKALINIZATION FACTOR-LIKE"/>
    <property type="match status" value="1"/>
</dbReference>
<dbReference type="Pfam" id="PF05498">
    <property type="entry name" value="RALF"/>
    <property type="match status" value="1"/>
</dbReference>
<name>RLF23_ARATH</name>
<proteinExistence type="evidence at protein level"/>
<gene>
    <name type="primary">RALF23</name>
    <name type="synonym">RALFL23</name>
    <name type="ordered locus">At3g16570</name>
    <name type="ORF">MGL6.2</name>
</gene>
<protein>
    <recommendedName>
        <fullName>Rapid alkalinization factor 23</fullName>
        <shortName>AtRALF23</shortName>
    </recommendedName>
    <alternativeName>
        <fullName>Protein RALF-like 23</fullName>
    </alternativeName>
</protein>
<reference key="1">
    <citation type="journal article" date="2000" name="DNA Res.">
        <title>Structural analysis of Arabidopsis thaliana chromosome 3. I. Sequence features of the regions of 4,504,864 bp covered by sixty P1 and TAC clones.</title>
        <authorList>
            <person name="Sato S."/>
            <person name="Nakamura Y."/>
            <person name="Kaneko T."/>
            <person name="Katoh T."/>
            <person name="Asamizu E."/>
            <person name="Tabata S."/>
        </authorList>
    </citation>
    <scope>NUCLEOTIDE SEQUENCE [LARGE SCALE GENOMIC DNA]</scope>
    <source>
        <strain>cv. Columbia</strain>
    </source>
</reference>
<reference key="2">
    <citation type="journal article" date="2017" name="Plant J.">
        <title>Araport11: a complete reannotation of the Arabidopsis thaliana reference genome.</title>
        <authorList>
            <person name="Cheng C.Y."/>
            <person name="Krishnakumar V."/>
            <person name="Chan A.P."/>
            <person name="Thibaud-Nissen F."/>
            <person name="Schobel S."/>
            <person name="Town C.D."/>
        </authorList>
    </citation>
    <scope>GENOME REANNOTATION</scope>
    <source>
        <strain>cv. Columbia</strain>
    </source>
</reference>
<reference key="3">
    <citation type="journal article" date="2003" name="Science">
        <title>Empirical analysis of transcriptional activity in the Arabidopsis genome.</title>
        <authorList>
            <person name="Yamada K."/>
            <person name="Lim J."/>
            <person name="Dale J.M."/>
            <person name="Chen H."/>
            <person name="Shinn P."/>
            <person name="Palm C.J."/>
            <person name="Southwick A.M."/>
            <person name="Wu H.C."/>
            <person name="Kim C.J."/>
            <person name="Nguyen M."/>
            <person name="Pham P.K."/>
            <person name="Cheuk R.F."/>
            <person name="Karlin-Newmann G."/>
            <person name="Liu S.X."/>
            <person name="Lam B."/>
            <person name="Sakano H."/>
            <person name="Wu T."/>
            <person name="Yu G."/>
            <person name="Miranda M."/>
            <person name="Quach H.L."/>
            <person name="Tripp M."/>
            <person name="Chang C.H."/>
            <person name="Lee J.M."/>
            <person name="Toriumi M.J."/>
            <person name="Chan M.M."/>
            <person name="Tang C.C."/>
            <person name="Onodera C.S."/>
            <person name="Deng J.M."/>
            <person name="Akiyama K."/>
            <person name="Ansari Y."/>
            <person name="Arakawa T."/>
            <person name="Banh J."/>
            <person name="Banno F."/>
            <person name="Bowser L."/>
            <person name="Brooks S.Y."/>
            <person name="Carninci P."/>
            <person name="Chao Q."/>
            <person name="Choy N."/>
            <person name="Enju A."/>
            <person name="Goldsmith A.D."/>
            <person name="Gurjal M."/>
            <person name="Hansen N.F."/>
            <person name="Hayashizaki Y."/>
            <person name="Johnson-Hopson C."/>
            <person name="Hsuan V.W."/>
            <person name="Iida K."/>
            <person name="Karnes M."/>
            <person name="Khan S."/>
            <person name="Koesema E."/>
            <person name="Ishida J."/>
            <person name="Jiang P.X."/>
            <person name="Jones T."/>
            <person name="Kawai J."/>
            <person name="Kamiya A."/>
            <person name="Meyers C."/>
            <person name="Nakajima M."/>
            <person name="Narusaka M."/>
            <person name="Seki M."/>
            <person name="Sakurai T."/>
            <person name="Satou M."/>
            <person name="Tamse R."/>
            <person name="Vaysberg M."/>
            <person name="Wallender E.K."/>
            <person name="Wong C."/>
            <person name="Yamamura Y."/>
            <person name="Yuan S."/>
            <person name="Shinozaki K."/>
            <person name="Davis R.W."/>
            <person name="Theologis A."/>
            <person name="Ecker J.R."/>
        </authorList>
    </citation>
    <scope>NUCLEOTIDE SEQUENCE [LARGE SCALE MRNA]</scope>
    <source>
        <strain>cv. Columbia</strain>
    </source>
</reference>
<reference key="4">
    <citation type="submission" date="2002-03" db="EMBL/GenBank/DDBJ databases">
        <title>Full-length cDNA from Arabidopsis thaliana.</title>
        <authorList>
            <person name="Brover V.V."/>
            <person name="Troukhan M.E."/>
            <person name="Alexandrov N.A."/>
            <person name="Lu Y.-P."/>
            <person name="Flavell R.B."/>
            <person name="Feldmann K.A."/>
        </authorList>
    </citation>
    <scope>NUCLEOTIDE SEQUENCE [LARGE SCALE MRNA]</scope>
</reference>
<reference key="5">
    <citation type="journal article" date="2002" name="In Silico Biol.">
        <title>Peptomics, identification of novel cationic Arabidopsis peptides with conserved sequence motifs.</title>
        <authorList>
            <person name="Olsen A.N."/>
            <person name="Mundy J."/>
            <person name="Skriver K."/>
        </authorList>
    </citation>
    <scope>GENE FAMILY</scope>
    <scope>NOMENCLATURE</scope>
</reference>
<reference key="6">
    <citation type="journal article" date="2009" name="Plant J.">
        <title>Regulation and processing of a plant peptide hormone, AtRALF23, in Arabidopsis.</title>
        <authorList>
            <person name="Srivastava R."/>
            <person name="Liu J.-X."/>
            <person name="Guo H."/>
            <person name="Yin Y."/>
            <person name="Howell S.H."/>
        </authorList>
    </citation>
    <scope>FUNCTION</scope>
    <scope>INDUCTION BY BRASSINOLIDE</scope>
    <scope>DEVELOPMENTAL STAGE</scope>
    <scope>CLEAVAGE BY SBT6.1</scope>
    <scope>MUTAGENESIS OF 85-ARG-ARG-86</scope>
</reference>
<accession>Q9LUS7</accession>